<feature type="chain" id="PRO_0000175315" description="DNA-directed RNA polymerase subunit alpha">
    <location>
        <begin position="1"/>
        <end position="334"/>
    </location>
</feature>
<feature type="region of interest" description="Alpha N-terminal domain (alpha-NTD)" evidence="2">
    <location>
        <begin position="1"/>
        <end position="231"/>
    </location>
</feature>
<feature type="region of interest" description="Alpha C-terminal domain (alpha-CTD)" evidence="2">
    <location>
        <begin position="247"/>
        <end position="334"/>
    </location>
</feature>
<reference key="1">
    <citation type="journal article" date="2003" name="Proc. Natl. Acad. Sci. U.S.A.">
        <title>The complete genome sequence of the carcinogenic bacterium Helicobacter hepaticus.</title>
        <authorList>
            <person name="Suerbaum S."/>
            <person name="Josenhans C."/>
            <person name="Sterzenbach T."/>
            <person name="Drescher B."/>
            <person name="Brandt P."/>
            <person name="Bell M."/>
            <person name="Droege M."/>
            <person name="Fartmann B."/>
            <person name="Fischer H.-P."/>
            <person name="Ge Z."/>
            <person name="Hoerster A."/>
            <person name="Holland R."/>
            <person name="Klein K."/>
            <person name="Koenig J."/>
            <person name="Macko L."/>
            <person name="Mendz G.L."/>
            <person name="Nyakatura G."/>
            <person name="Schauer D.B."/>
            <person name="Shen Z."/>
            <person name="Weber J."/>
            <person name="Frosch M."/>
            <person name="Fox J.G."/>
        </authorList>
    </citation>
    <scope>NUCLEOTIDE SEQUENCE [LARGE SCALE GENOMIC DNA]</scope>
    <source>
        <strain>ATCC 51449 / 3B1</strain>
    </source>
</reference>
<name>RPOA_HELHP</name>
<keyword id="KW-0240">DNA-directed RNA polymerase</keyword>
<keyword id="KW-0548">Nucleotidyltransferase</keyword>
<keyword id="KW-1185">Reference proteome</keyword>
<keyword id="KW-0804">Transcription</keyword>
<keyword id="KW-0808">Transferase</keyword>
<organism>
    <name type="scientific">Helicobacter hepaticus (strain ATCC 51449 / 3B1)</name>
    <dbReference type="NCBI Taxonomy" id="235279"/>
    <lineage>
        <taxon>Bacteria</taxon>
        <taxon>Pseudomonadati</taxon>
        <taxon>Campylobacterota</taxon>
        <taxon>Epsilonproteobacteria</taxon>
        <taxon>Campylobacterales</taxon>
        <taxon>Helicobacteraceae</taxon>
        <taxon>Helicobacter</taxon>
    </lineage>
</organism>
<gene>
    <name evidence="2" type="primary">rpoA</name>
    <name type="ordered locus">HH_1403</name>
</gene>
<protein>
    <recommendedName>
        <fullName evidence="2">DNA-directed RNA polymerase subunit alpha</fullName>
        <shortName evidence="2">RNAP subunit alpha</shortName>
        <ecNumber evidence="2">2.7.7.6</ecNumber>
    </recommendedName>
    <alternativeName>
        <fullName evidence="2">RNA polymerase subunit alpha</fullName>
    </alternativeName>
    <alternativeName>
        <fullName evidence="2">Transcriptase subunit alpha</fullName>
    </alternativeName>
</protein>
<dbReference type="EC" id="2.7.7.6" evidence="2"/>
<dbReference type="EMBL" id="AE017125">
    <property type="protein sequence ID" value="AAP78000.1"/>
    <property type="molecule type" value="Genomic_DNA"/>
</dbReference>
<dbReference type="RefSeq" id="WP_011116243.1">
    <property type="nucleotide sequence ID" value="NC_004917.1"/>
</dbReference>
<dbReference type="SMR" id="Q7VGB9"/>
<dbReference type="STRING" id="235279.HH_1403"/>
<dbReference type="KEGG" id="hhe:HH_1403"/>
<dbReference type="eggNOG" id="COG0202">
    <property type="taxonomic scope" value="Bacteria"/>
</dbReference>
<dbReference type="HOGENOM" id="CLU_053084_0_1_7"/>
<dbReference type="OrthoDB" id="9805706at2"/>
<dbReference type="Proteomes" id="UP000002495">
    <property type="component" value="Chromosome"/>
</dbReference>
<dbReference type="GO" id="GO:0005737">
    <property type="term" value="C:cytoplasm"/>
    <property type="evidence" value="ECO:0007669"/>
    <property type="project" value="UniProtKB-ARBA"/>
</dbReference>
<dbReference type="GO" id="GO:0000428">
    <property type="term" value="C:DNA-directed RNA polymerase complex"/>
    <property type="evidence" value="ECO:0007669"/>
    <property type="project" value="UniProtKB-KW"/>
</dbReference>
<dbReference type="GO" id="GO:0003677">
    <property type="term" value="F:DNA binding"/>
    <property type="evidence" value="ECO:0007669"/>
    <property type="project" value="UniProtKB-UniRule"/>
</dbReference>
<dbReference type="GO" id="GO:0003899">
    <property type="term" value="F:DNA-directed RNA polymerase activity"/>
    <property type="evidence" value="ECO:0007669"/>
    <property type="project" value="UniProtKB-UniRule"/>
</dbReference>
<dbReference type="GO" id="GO:0046983">
    <property type="term" value="F:protein dimerization activity"/>
    <property type="evidence" value="ECO:0007669"/>
    <property type="project" value="InterPro"/>
</dbReference>
<dbReference type="GO" id="GO:0006351">
    <property type="term" value="P:DNA-templated transcription"/>
    <property type="evidence" value="ECO:0007669"/>
    <property type="project" value="UniProtKB-UniRule"/>
</dbReference>
<dbReference type="CDD" id="cd06928">
    <property type="entry name" value="RNAP_alpha_NTD"/>
    <property type="match status" value="1"/>
</dbReference>
<dbReference type="Gene3D" id="1.10.150.20">
    <property type="entry name" value="5' to 3' exonuclease, C-terminal subdomain"/>
    <property type="match status" value="1"/>
</dbReference>
<dbReference type="Gene3D" id="2.170.120.12">
    <property type="entry name" value="DNA-directed RNA polymerase, insert domain"/>
    <property type="match status" value="1"/>
</dbReference>
<dbReference type="Gene3D" id="3.30.1360.10">
    <property type="entry name" value="RNA polymerase, RBP11-like subunit"/>
    <property type="match status" value="1"/>
</dbReference>
<dbReference type="HAMAP" id="MF_00059">
    <property type="entry name" value="RNApol_bact_RpoA"/>
    <property type="match status" value="1"/>
</dbReference>
<dbReference type="InterPro" id="IPR011262">
    <property type="entry name" value="DNA-dir_RNA_pol_insert"/>
</dbReference>
<dbReference type="InterPro" id="IPR011263">
    <property type="entry name" value="DNA-dir_RNA_pol_RpoA/D/Rpb3"/>
</dbReference>
<dbReference type="InterPro" id="IPR011773">
    <property type="entry name" value="DNA-dir_RpoA"/>
</dbReference>
<dbReference type="InterPro" id="IPR036603">
    <property type="entry name" value="RBP11-like"/>
</dbReference>
<dbReference type="InterPro" id="IPR011260">
    <property type="entry name" value="RNAP_asu_C"/>
</dbReference>
<dbReference type="InterPro" id="IPR036643">
    <property type="entry name" value="RNApol_insert_sf"/>
</dbReference>
<dbReference type="NCBIfam" id="NF003517">
    <property type="entry name" value="PRK05182.2-3"/>
    <property type="match status" value="1"/>
</dbReference>
<dbReference type="NCBIfam" id="NF003519">
    <property type="entry name" value="PRK05182.2-5"/>
    <property type="match status" value="1"/>
</dbReference>
<dbReference type="NCBIfam" id="TIGR02027">
    <property type="entry name" value="rpoA"/>
    <property type="match status" value="1"/>
</dbReference>
<dbReference type="Pfam" id="PF01000">
    <property type="entry name" value="RNA_pol_A_bac"/>
    <property type="match status" value="1"/>
</dbReference>
<dbReference type="Pfam" id="PF03118">
    <property type="entry name" value="RNA_pol_A_CTD"/>
    <property type="match status" value="1"/>
</dbReference>
<dbReference type="Pfam" id="PF01193">
    <property type="entry name" value="RNA_pol_L"/>
    <property type="match status" value="1"/>
</dbReference>
<dbReference type="SMART" id="SM00662">
    <property type="entry name" value="RPOLD"/>
    <property type="match status" value="1"/>
</dbReference>
<dbReference type="SUPFAM" id="SSF47789">
    <property type="entry name" value="C-terminal domain of RNA polymerase alpha subunit"/>
    <property type="match status" value="1"/>
</dbReference>
<dbReference type="SUPFAM" id="SSF56553">
    <property type="entry name" value="Insert subdomain of RNA polymerase alpha subunit"/>
    <property type="match status" value="1"/>
</dbReference>
<dbReference type="SUPFAM" id="SSF55257">
    <property type="entry name" value="RBP11-like subunits of RNA polymerase"/>
    <property type="match status" value="1"/>
</dbReference>
<accession>Q7VGB9</accession>
<comment type="function">
    <text evidence="2">DNA-dependent RNA polymerase catalyzes the transcription of DNA into RNA using the four ribonucleoside triphosphates as substrates.</text>
</comment>
<comment type="catalytic activity">
    <reaction evidence="2">
        <text>RNA(n) + a ribonucleoside 5'-triphosphate = RNA(n+1) + diphosphate</text>
        <dbReference type="Rhea" id="RHEA:21248"/>
        <dbReference type="Rhea" id="RHEA-COMP:14527"/>
        <dbReference type="Rhea" id="RHEA-COMP:17342"/>
        <dbReference type="ChEBI" id="CHEBI:33019"/>
        <dbReference type="ChEBI" id="CHEBI:61557"/>
        <dbReference type="ChEBI" id="CHEBI:140395"/>
        <dbReference type="EC" id="2.7.7.6"/>
    </reaction>
</comment>
<comment type="subunit">
    <text evidence="1">Homodimer. The RNAP catalytic core consists of 2 alpha, 1 beta/beta' and 1 omega subunit. When a sigma factor is associated with the core the holoenzyme is formed, which can initiate transcription (By similarity).</text>
</comment>
<comment type="domain">
    <text evidence="2">The N-terminal domain is essential for RNAP assembly and basal transcription, whereas the C-terminal domain is involved in interaction with transcriptional regulators and with upstream promoter elements.</text>
</comment>
<comment type="similarity">
    <text evidence="2">Belongs to the RNA polymerase alpha chain family.</text>
</comment>
<proteinExistence type="inferred from homology"/>
<evidence type="ECO:0000250" key="1"/>
<evidence type="ECO:0000255" key="2">
    <source>
        <dbReference type="HAMAP-Rule" id="MF_00059"/>
    </source>
</evidence>
<sequence length="334" mass="37309">MNMIKIEPYIPTDISIEEISTNRIRISAYPFESGYAITLAHPIRRLLLSSSVGYAPTALRIQGVTHEFDSIRGIVEDVSHFITNLKNIRFLIKDTESDNVQLHYEFKGPMVLSANELVNDMVGIVNPEAYLATINENASLSFSLIVQKGIGYVPSESIRGKISEDYIPLDAYFTPVKKAVYEIENVLVEDNPNYEKIVFDIETDGQIEPITAFKEAIAIMHKQMSIFGVDLSTASSGTRNISEDSGELKTLMIKIDTLNLSARCFNCLDRSGLKYVGELVIMSENELKNIKNMGKKSYDEIADKLEELGYPVGGEIADDILPLLNRKLAKLKSN</sequence>